<organism>
    <name type="scientific">Pseudomonas syringae pv. tomato (strain ATCC BAA-871 / DC3000)</name>
    <dbReference type="NCBI Taxonomy" id="223283"/>
    <lineage>
        <taxon>Bacteria</taxon>
        <taxon>Pseudomonadati</taxon>
        <taxon>Pseudomonadota</taxon>
        <taxon>Gammaproteobacteria</taxon>
        <taxon>Pseudomonadales</taxon>
        <taxon>Pseudomonadaceae</taxon>
        <taxon>Pseudomonas</taxon>
    </lineage>
</organism>
<comment type="subcellular location">
    <subcellularLocation>
        <location evidence="1">Cytoplasm</location>
    </subcellularLocation>
</comment>
<comment type="similarity">
    <text evidence="1">Belongs to the TACO1 family.</text>
</comment>
<gene>
    <name type="ordered locus">PSPTO_3980</name>
</gene>
<proteinExistence type="inferred from homology"/>
<accession>Q87Y32</accession>
<dbReference type="EMBL" id="AE016853">
    <property type="protein sequence ID" value="AAO57439.1"/>
    <property type="molecule type" value="Genomic_DNA"/>
</dbReference>
<dbReference type="RefSeq" id="NP_793744.1">
    <property type="nucleotide sequence ID" value="NC_004578.1"/>
</dbReference>
<dbReference type="RefSeq" id="WP_011104813.1">
    <property type="nucleotide sequence ID" value="NC_004578.1"/>
</dbReference>
<dbReference type="SMR" id="Q87Y32"/>
<dbReference type="STRING" id="223283.PSPTO_3980"/>
<dbReference type="GeneID" id="1185656"/>
<dbReference type="KEGG" id="pst:PSPTO_3980"/>
<dbReference type="PATRIC" id="fig|223283.9.peg.4080"/>
<dbReference type="eggNOG" id="COG0217">
    <property type="taxonomic scope" value="Bacteria"/>
</dbReference>
<dbReference type="HOGENOM" id="CLU_062974_2_2_6"/>
<dbReference type="OrthoDB" id="9781053at2"/>
<dbReference type="PhylomeDB" id="Q87Y32"/>
<dbReference type="Proteomes" id="UP000002515">
    <property type="component" value="Chromosome"/>
</dbReference>
<dbReference type="GO" id="GO:0005829">
    <property type="term" value="C:cytosol"/>
    <property type="evidence" value="ECO:0007669"/>
    <property type="project" value="TreeGrafter"/>
</dbReference>
<dbReference type="GO" id="GO:0003677">
    <property type="term" value="F:DNA binding"/>
    <property type="evidence" value="ECO:0007669"/>
    <property type="project" value="UniProtKB-UniRule"/>
</dbReference>
<dbReference type="GO" id="GO:0006355">
    <property type="term" value="P:regulation of DNA-templated transcription"/>
    <property type="evidence" value="ECO:0007669"/>
    <property type="project" value="UniProtKB-UniRule"/>
</dbReference>
<dbReference type="FunFam" id="1.10.10.200:FF:000001">
    <property type="entry name" value="Probable transcriptional regulatory protein YebC"/>
    <property type="match status" value="1"/>
</dbReference>
<dbReference type="FunFam" id="3.30.70.980:FF:000002">
    <property type="entry name" value="Probable transcriptional regulatory protein YebC"/>
    <property type="match status" value="1"/>
</dbReference>
<dbReference type="Gene3D" id="1.10.10.200">
    <property type="match status" value="1"/>
</dbReference>
<dbReference type="Gene3D" id="3.30.70.980">
    <property type="match status" value="2"/>
</dbReference>
<dbReference type="HAMAP" id="MF_00693">
    <property type="entry name" value="Transcrip_reg_TACO1"/>
    <property type="match status" value="1"/>
</dbReference>
<dbReference type="InterPro" id="IPR017856">
    <property type="entry name" value="Integrase-like_N"/>
</dbReference>
<dbReference type="InterPro" id="IPR048300">
    <property type="entry name" value="TACO1_YebC-like_2nd/3rd_dom"/>
</dbReference>
<dbReference type="InterPro" id="IPR049083">
    <property type="entry name" value="TACO1_YebC_N"/>
</dbReference>
<dbReference type="InterPro" id="IPR002876">
    <property type="entry name" value="Transcrip_reg_TACO1-like"/>
</dbReference>
<dbReference type="InterPro" id="IPR026564">
    <property type="entry name" value="Transcrip_reg_TACO1-like_dom3"/>
</dbReference>
<dbReference type="InterPro" id="IPR029072">
    <property type="entry name" value="YebC-like"/>
</dbReference>
<dbReference type="NCBIfam" id="NF001030">
    <property type="entry name" value="PRK00110.1"/>
    <property type="match status" value="1"/>
</dbReference>
<dbReference type="NCBIfam" id="NF009044">
    <property type="entry name" value="PRK12378.1"/>
    <property type="match status" value="1"/>
</dbReference>
<dbReference type="NCBIfam" id="TIGR01033">
    <property type="entry name" value="YebC/PmpR family DNA-binding transcriptional regulator"/>
    <property type="match status" value="1"/>
</dbReference>
<dbReference type="PANTHER" id="PTHR12532:SF6">
    <property type="entry name" value="TRANSCRIPTIONAL REGULATORY PROTEIN YEBC-RELATED"/>
    <property type="match status" value="1"/>
</dbReference>
<dbReference type="PANTHER" id="PTHR12532">
    <property type="entry name" value="TRANSLATIONAL ACTIVATOR OF CYTOCHROME C OXIDASE 1"/>
    <property type="match status" value="1"/>
</dbReference>
<dbReference type="Pfam" id="PF20772">
    <property type="entry name" value="TACO1_YebC_N"/>
    <property type="match status" value="1"/>
</dbReference>
<dbReference type="Pfam" id="PF01709">
    <property type="entry name" value="Transcrip_reg"/>
    <property type="match status" value="1"/>
</dbReference>
<dbReference type="SUPFAM" id="SSF75625">
    <property type="entry name" value="YebC-like"/>
    <property type="match status" value="1"/>
</dbReference>
<feature type="chain" id="PRO_0000175872" description="Probable transcriptional regulatory protein PSPTO_3980">
    <location>
        <begin position="1"/>
        <end position="248"/>
    </location>
</feature>
<reference key="1">
    <citation type="journal article" date="2003" name="Proc. Natl. Acad. Sci. U.S.A.">
        <title>The complete genome sequence of the Arabidopsis and tomato pathogen Pseudomonas syringae pv. tomato DC3000.</title>
        <authorList>
            <person name="Buell C.R."/>
            <person name="Joardar V."/>
            <person name="Lindeberg M."/>
            <person name="Selengut J."/>
            <person name="Paulsen I.T."/>
            <person name="Gwinn M.L."/>
            <person name="Dodson R.J."/>
            <person name="DeBoy R.T."/>
            <person name="Durkin A.S."/>
            <person name="Kolonay J.F."/>
            <person name="Madupu R."/>
            <person name="Daugherty S.C."/>
            <person name="Brinkac L.M."/>
            <person name="Beanan M.J."/>
            <person name="Haft D.H."/>
            <person name="Nelson W.C."/>
            <person name="Davidsen T.M."/>
            <person name="Zafar N."/>
            <person name="Zhou L."/>
            <person name="Liu J."/>
            <person name="Yuan Q."/>
            <person name="Khouri H.M."/>
            <person name="Fedorova N.B."/>
            <person name="Tran B."/>
            <person name="Russell D."/>
            <person name="Berry K.J."/>
            <person name="Utterback T.R."/>
            <person name="Van Aken S.E."/>
            <person name="Feldblyum T.V."/>
            <person name="D'Ascenzo M."/>
            <person name="Deng W.-L."/>
            <person name="Ramos A.R."/>
            <person name="Alfano J.R."/>
            <person name="Cartinhour S."/>
            <person name="Chatterjee A.K."/>
            <person name="Delaney T.P."/>
            <person name="Lazarowitz S.G."/>
            <person name="Martin G.B."/>
            <person name="Schneider D.J."/>
            <person name="Tang X."/>
            <person name="Bender C.L."/>
            <person name="White O."/>
            <person name="Fraser C.M."/>
            <person name="Collmer A."/>
        </authorList>
    </citation>
    <scope>NUCLEOTIDE SEQUENCE [LARGE SCALE GENOMIC DNA]</scope>
    <source>
        <strain>ATCC BAA-871 / DC3000</strain>
    </source>
</reference>
<name>Y3980_PSESM</name>
<protein>
    <recommendedName>
        <fullName evidence="1">Probable transcriptional regulatory protein PSPTO_3980</fullName>
    </recommendedName>
</protein>
<sequence>MAGHSKWANIKHRKERQDAKKGKIFTKWIRELTVAARQGGGDPGSNPRLRLALDKALGANMTRDTIDRAVARGVGASDGDDVEELGYEGYGPGGVAVMVETMTDNRNRTAAAVRHAFTKCGGNLGTDGSVAYLFDRKGQISFAAGVDEDSLIEAAMEADADDVVTNDDGSIDVFTSFSGFYAVRNALEAAGFMAADAEIVMLPTTSAVLDLETAEKVLKLIDMLEDLDDVQNVYSNAEIPDEVMEQLG</sequence>
<keyword id="KW-0963">Cytoplasm</keyword>
<keyword id="KW-0238">DNA-binding</keyword>
<keyword id="KW-1185">Reference proteome</keyword>
<keyword id="KW-0804">Transcription</keyword>
<keyword id="KW-0805">Transcription regulation</keyword>
<evidence type="ECO:0000255" key="1">
    <source>
        <dbReference type="HAMAP-Rule" id="MF_00693"/>
    </source>
</evidence>